<protein>
    <recommendedName>
        <fullName evidence="1">Large ribosomal subunit protein bL35</fullName>
    </recommendedName>
    <alternativeName>
        <fullName evidence="2">50S ribosomal protein L35</fullName>
    </alternativeName>
</protein>
<organism>
    <name type="scientific">Clostridium botulinum (strain 657 / Type Ba4)</name>
    <dbReference type="NCBI Taxonomy" id="515621"/>
    <lineage>
        <taxon>Bacteria</taxon>
        <taxon>Bacillati</taxon>
        <taxon>Bacillota</taxon>
        <taxon>Clostridia</taxon>
        <taxon>Eubacteriales</taxon>
        <taxon>Clostridiaceae</taxon>
        <taxon>Clostridium</taxon>
    </lineage>
</organism>
<keyword id="KW-0687">Ribonucleoprotein</keyword>
<keyword id="KW-0689">Ribosomal protein</keyword>
<gene>
    <name evidence="1" type="primary">rpmI</name>
    <name type="ordered locus">CLJ_B3402</name>
</gene>
<evidence type="ECO:0000255" key="1">
    <source>
        <dbReference type="HAMAP-Rule" id="MF_00514"/>
    </source>
</evidence>
<evidence type="ECO:0000305" key="2"/>
<proteinExistence type="inferred from homology"/>
<sequence>MPKMKTKRAAAKRFKVTGTGKLKRAKAFKSHILTKKSRKTKRNLRKAGYVSESQEKVMKKVLPYL</sequence>
<name>RL35_CLOB6</name>
<comment type="similarity">
    <text evidence="1">Belongs to the bacterial ribosomal protein bL35 family.</text>
</comment>
<dbReference type="EMBL" id="CP001083">
    <property type="protein sequence ID" value="ACQ52996.1"/>
    <property type="molecule type" value="Genomic_DNA"/>
</dbReference>
<dbReference type="RefSeq" id="WP_003357520.1">
    <property type="nucleotide sequence ID" value="NC_012658.1"/>
</dbReference>
<dbReference type="SMR" id="C3KTJ8"/>
<dbReference type="GeneID" id="92939857"/>
<dbReference type="KEGG" id="cbi:CLJ_B3402"/>
<dbReference type="HOGENOM" id="CLU_169643_1_1_9"/>
<dbReference type="Proteomes" id="UP000002333">
    <property type="component" value="Chromosome"/>
</dbReference>
<dbReference type="GO" id="GO:0022625">
    <property type="term" value="C:cytosolic large ribosomal subunit"/>
    <property type="evidence" value="ECO:0007669"/>
    <property type="project" value="TreeGrafter"/>
</dbReference>
<dbReference type="GO" id="GO:0003735">
    <property type="term" value="F:structural constituent of ribosome"/>
    <property type="evidence" value="ECO:0007669"/>
    <property type="project" value="InterPro"/>
</dbReference>
<dbReference type="GO" id="GO:0006412">
    <property type="term" value="P:translation"/>
    <property type="evidence" value="ECO:0007669"/>
    <property type="project" value="UniProtKB-UniRule"/>
</dbReference>
<dbReference type="FunFam" id="4.10.410.60:FF:000001">
    <property type="entry name" value="50S ribosomal protein L35"/>
    <property type="match status" value="1"/>
</dbReference>
<dbReference type="Gene3D" id="4.10.410.60">
    <property type="match status" value="1"/>
</dbReference>
<dbReference type="HAMAP" id="MF_00514">
    <property type="entry name" value="Ribosomal_bL35"/>
    <property type="match status" value="1"/>
</dbReference>
<dbReference type="InterPro" id="IPR001706">
    <property type="entry name" value="Ribosomal_bL35"/>
</dbReference>
<dbReference type="InterPro" id="IPR021137">
    <property type="entry name" value="Ribosomal_bL35-like"/>
</dbReference>
<dbReference type="InterPro" id="IPR018265">
    <property type="entry name" value="Ribosomal_bL35_CS"/>
</dbReference>
<dbReference type="InterPro" id="IPR037229">
    <property type="entry name" value="Ribosomal_bL35_sf"/>
</dbReference>
<dbReference type="NCBIfam" id="TIGR00001">
    <property type="entry name" value="rpmI_bact"/>
    <property type="match status" value="1"/>
</dbReference>
<dbReference type="PANTHER" id="PTHR33343">
    <property type="entry name" value="54S RIBOSOMAL PROTEIN BL35M"/>
    <property type="match status" value="1"/>
</dbReference>
<dbReference type="PANTHER" id="PTHR33343:SF1">
    <property type="entry name" value="LARGE RIBOSOMAL SUBUNIT PROTEIN BL35M"/>
    <property type="match status" value="1"/>
</dbReference>
<dbReference type="Pfam" id="PF01632">
    <property type="entry name" value="Ribosomal_L35p"/>
    <property type="match status" value="1"/>
</dbReference>
<dbReference type="PRINTS" id="PR00064">
    <property type="entry name" value="RIBOSOMALL35"/>
</dbReference>
<dbReference type="SUPFAM" id="SSF143034">
    <property type="entry name" value="L35p-like"/>
    <property type="match status" value="1"/>
</dbReference>
<dbReference type="PROSITE" id="PS00936">
    <property type="entry name" value="RIBOSOMAL_L35"/>
    <property type="match status" value="1"/>
</dbReference>
<reference key="1">
    <citation type="submission" date="2008-05" db="EMBL/GenBank/DDBJ databases">
        <title>Genome sequence of Clostridium botulinum Ba4 strain 657.</title>
        <authorList>
            <person name="Shrivastava S."/>
            <person name="Brown J.L."/>
            <person name="Bruce D."/>
            <person name="Detter C."/>
            <person name="Munk C."/>
            <person name="Smith L.A."/>
            <person name="Smith T.J."/>
            <person name="Sutton G."/>
            <person name="Brettin T.S."/>
        </authorList>
    </citation>
    <scope>NUCLEOTIDE SEQUENCE [LARGE SCALE GENOMIC DNA]</scope>
    <source>
        <strain>657 / Type Ba4</strain>
    </source>
</reference>
<feature type="chain" id="PRO_1000211694" description="Large ribosomal subunit protein bL35">
    <location>
        <begin position="1"/>
        <end position="65"/>
    </location>
</feature>
<accession>C3KTJ8</accession>